<dbReference type="EMBL" id="X13583">
    <property type="protein sequence ID" value="CAA31922.1"/>
    <property type="molecule type" value="Genomic_DNA"/>
</dbReference>
<dbReference type="EMBL" id="U00096">
    <property type="protein sequence ID" value="AAC74338.1"/>
    <property type="molecule type" value="Genomic_DNA"/>
</dbReference>
<dbReference type="EMBL" id="AP009048">
    <property type="protein sequence ID" value="BAA14788.1"/>
    <property type="molecule type" value="Genomic_DNA"/>
</dbReference>
<dbReference type="EMBL" id="U24195">
    <property type="protein sequence ID" value="AAB60065.1"/>
    <property type="molecule type" value="Genomic_DNA"/>
</dbReference>
<dbReference type="EMBL" id="U24196">
    <property type="protein sequence ID" value="AAB60073.1"/>
    <property type="molecule type" value="Genomic_DNA"/>
</dbReference>
<dbReference type="EMBL" id="U24197">
    <property type="protein sequence ID" value="AAB60081.1"/>
    <property type="molecule type" value="Genomic_DNA"/>
</dbReference>
<dbReference type="EMBL" id="U24198">
    <property type="protein sequence ID" value="AAB60089.1"/>
    <property type="molecule type" value="Genomic_DNA"/>
</dbReference>
<dbReference type="EMBL" id="U24199">
    <property type="protein sequence ID" value="AAB60097.1"/>
    <property type="molecule type" value="Genomic_DNA"/>
</dbReference>
<dbReference type="EMBL" id="U24200">
    <property type="protein sequence ID" value="AAB60105.1"/>
    <property type="molecule type" value="Genomic_DNA"/>
</dbReference>
<dbReference type="EMBL" id="U24201">
    <property type="protein sequence ID" value="AAB60113.1"/>
    <property type="molecule type" value="Genomic_DNA"/>
</dbReference>
<dbReference type="EMBL" id="U24202">
    <property type="protein sequence ID" value="AAB60121.1"/>
    <property type="molecule type" value="Genomic_DNA"/>
</dbReference>
<dbReference type="EMBL" id="U24203">
    <property type="protein sequence ID" value="AAB60129.1"/>
    <property type="molecule type" value="Genomic_DNA"/>
</dbReference>
<dbReference type="EMBL" id="U24204">
    <property type="protein sequence ID" value="AAB60137.1"/>
    <property type="molecule type" value="Genomic_DNA"/>
</dbReference>
<dbReference type="EMBL" id="U24205">
    <property type="protein sequence ID" value="AAB60145.1"/>
    <property type="molecule type" value="Genomic_DNA"/>
</dbReference>
<dbReference type="EMBL" id="U24206">
    <property type="protein sequence ID" value="AAB60153.1"/>
    <property type="molecule type" value="Genomic_DNA"/>
</dbReference>
<dbReference type="PIR" id="S07797">
    <property type="entry name" value="S07797"/>
</dbReference>
<dbReference type="PIR" id="T45501">
    <property type="entry name" value="T45501"/>
</dbReference>
<dbReference type="RefSeq" id="NP_415772.1">
    <property type="nucleotide sequence ID" value="NC_000913.3"/>
</dbReference>
<dbReference type="RefSeq" id="WP_000737226.1">
    <property type="nucleotide sequence ID" value="NZ_STEB01000005.1"/>
</dbReference>
<dbReference type="PDB" id="2F1T">
    <property type="method" value="X-ray"/>
    <property type="resolution" value="3.00 A"/>
    <property type="chains" value="A/B/C=22-212"/>
</dbReference>
<dbReference type="PDB" id="2F1V">
    <property type="method" value="X-ray"/>
    <property type="resolution" value="2.70 A"/>
    <property type="chains" value="A/B/C/D/E/F=22-212"/>
</dbReference>
<dbReference type="PDBsum" id="2F1T"/>
<dbReference type="PDBsum" id="2F1V"/>
<dbReference type="BMRB" id="P0A915"/>
<dbReference type="SMR" id="P0A915"/>
<dbReference type="BioGRID" id="4263000">
    <property type="interactions" value="232"/>
</dbReference>
<dbReference type="FunCoup" id="P0A915">
    <property type="interactions" value="93"/>
</dbReference>
<dbReference type="IntAct" id="P0A915">
    <property type="interactions" value="5"/>
</dbReference>
<dbReference type="MINT" id="P0A915"/>
<dbReference type="STRING" id="511145.b1256"/>
<dbReference type="DrugBank" id="DB04233">
    <property type="generic name" value="(Hydroxyethyloxy)Tri(Ethyloxy)Octane"/>
</dbReference>
<dbReference type="DrugBank" id="DB04147">
    <property type="generic name" value="Dodecyldimethylamine N-oxide"/>
</dbReference>
<dbReference type="TCDB" id="1.B.39.1.6">
    <property type="family name" value="the bacterial porin, ompw (ompw) family"/>
</dbReference>
<dbReference type="jPOST" id="P0A915"/>
<dbReference type="PaxDb" id="511145-b1256"/>
<dbReference type="EnsemblBacteria" id="AAC74338">
    <property type="protein sequence ID" value="AAC74338"/>
    <property type="gene ID" value="b1256"/>
</dbReference>
<dbReference type="GeneID" id="75203368"/>
<dbReference type="GeneID" id="945128"/>
<dbReference type="KEGG" id="ecj:JW1248"/>
<dbReference type="KEGG" id="eco:b1256"/>
<dbReference type="KEGG" id="ecoc:C3026_07375"/>
<dbReference type="PATRIC" id="fig|1411691.4.peg.1027"/>
<dbReference type="EchoBASE" id="EB1114"/>
<dbReference type="eggNOG" id="COG3047">
    <property type="taxonomic scope" value="Bacteria"/>
</dbReference>
<dbReference type="HOGENOM" id="CLU_042505_1_1_6"/>
<dbReference type="InParanoid" id="P0A915"/>
<dbReference type="OMA" id="GMDYMLT"/>
<dbReference type="OrthoDB" id="9807574at2"/>
<dbReference type="PhylomeDB" id="P0A915"/>
<dbReference type="BioCyc" id="EcoCyc:EG11124-MONOMER"/>
<dbReference type="EvolutionaryTrace" id="P0A915"/>
<dbReference type="PRO" id="PR:P0A915"/>
<dbReference type="Proteomes" id="UP000000625">
    <property type="component" value="Chromosome"/>
</dbReference>
<dbReference type="GO" id="GO:0009279">
    <property type="term" value="C:cell outer membrane"/>
    <property type="evidence" value="ECO:0000314"/>
    <property type="project" value="EcoCyc"/>
</dbReference>
<dbReference type="GO" id="GO:0055085">
    <property type="term" value="P:transmembrane transport"/>
    <property type="evidence" value="ECO:0000318"/>
    <property type="project" value="GO_Central"/>
</dbReference>
<dbReference type="FunFam" id="2.40.160.20:FF:000001">
    <property type="entry name" value="Outer membrane protein W"/>
    <property type="match status" value="1"/>
</dbReference>
<dbReference type="Gene3D" id="2.40.160.20">
    <property type="match status" value="1"/>
</dbReference>
<dbReference type="InterPro" id="IPR011250">
    <property type="entry name" value="OMP/PagP_b-brl"/>
</dbReference>
<dbReference type="InterPro" id="IPR005618">
    <property type="entry name" value="OMPW"/>
</dbReference>
<dbReference type="NCBIfam" id="NF008202">
    <property type="entry name" value="PRK10959.1"/>
    <property type="match status" value="1"/>
</dbReference>
<dbReference type="PANTHER" id="PTHR36920">
    <property type="match status" value="1"/>
</dbReference>
<dbReference type="PANTHER" id="PTHR36920:SF1">
    <property type="entry name" value="OUTER MEMBRANE PROTEIN W"/>
    <property type="match status" value="1"/>
</dbReference>
<dbReference type="Pfam" id="PF03922">
    <property type="entry name" value="OmpW"/>
    <property type="match status" value="1"/>
</dbReference>
<dbReference type="SUPFAM" id="SSF56925">
    <property type="entry name" value="OMPA-like"/>
    <property type="match status" value="1"/>
</dbReference>
<reference key="1">
    <citation type="journal article" date="1988" name="Genetics">
        <title>Molecular evolution of the Escherichia coli chromosome. I. Analysis of structure and natural variation in a previously uncharacterized region between trp and tonB.</title>
        <authorList>
            <person name="Stoltzfus A."/>
            <person name="Leslie J.F."/>
            <person name="Milkman R."/>
        </authorList>
    </citation>
    <scope>NUCLEOTIDE SEQUENCE [GENOMIC DNA]</scope>
    <source>
        <strain>K12</strain>
    </source>
</reference>
<reference key="2">
    <citation type="journal article" date="1996" name="DNA Res.">
        <title>A 570-kb DNA sequence of the Escherichia coli K-12 genome corresponding to the 28.0-40.1 min region on the linkage map.</title>
        <authorList>
            <person name="Aiba H."/>
            <person name="Baba T."/>
            <person name="Fujita K."/>
            <person name="Hayashi K."/>
            <person name="Inada T."/>
            <person name="Isono K."/>
            <person name="Itoh T."/>
            <person name="Kasai H."/>
            <person name="Kashimoto K."/>
            <person name="Kimura S."/>
            <person name="Kitakawa M."/>
            <person name="Kitagawa M."/>
            <person name="Makino K."/>
            <person name="Miki T."/>
            <person name="Mizobuchi K."/>
            <person name="Mori H."/>
            <person name="Mori T."/>
            <person name="Motomura K."/>
            <person name="Nakade S."/>
            <person name="Nakamura Y."/>
            <person name="Nashimoto H."/>
            <person name="Nishio Y."/>
            <person name="Oshima T."/>
            <person name="Saito N."/>
            <person name="Sampei G."/>
            <person name="Seki Y."/>
            <person name="Sivasundaram S."/>
            <person name="Tagami H."/>
            <person name="Takeda J."/>
            <person name="Takemoto K."/>
            <person name="Takeuchi Y."/>
            <person name="Wada C."/>
            <person name="Yamamoto Y."/>
            <person name="Horiuchi T."/>
        </authorList>
    </citation>
    <scope>NUCLEOTIDE SEQUENCE [LARGE SCALE GENOMIC DNA]</scope>
    <source>
        <strain>K12 / W3110 / ATCC 27325 / DSM 5911</strain>
    </source>
</reference>
<reference key="3">
    <citation type="journal article" date="1997" name="Science">
        <title>The complete genome sequence of Escherichia coli K-12.</title>
        <authorList>
            <person name="Blattner F.R."/>
            <person name="Plunkett G. III"/>
            <person name="Bloch C.A."/>
            <person name="Perna N.T."/>
            <person name="Burland V."/>
            <person name="Riley M."/>
            <person name="Collado-Vides J."/>
            <person name="Glasner J.D."/>
            <person name="Rode C.K."/>
            <person name="Mayhew G.F."/>
            <person name="Gregor J."/>
            <person name="Davis N.W."/>
            <person name="Kirkpatrick H.A."/>
            <person name="Goeden M.A."/>
            <person name="Rose D.J."/>
            <person name="Mau B."/>
            <person name="Shao Y."/>
        </authorList>
    </citation>
    <scope>NUCLEOTIDE SEQUENCE [LARGE SCALE GENOMIC DNA]</scope>
    <source>
        <strain>K12 / MG1655 / ATCC 47076</strain>
    </source>
</reference>
<reference key="4">
    <citation type="journal article" date="2006" name="Mol. Syst. Biol.">
        <title>Highly accurate genome sequences of Escherichia coli K-12 strains MG1655 and W3110.</title>
        <authorList>
            <person name="Hayashi K."/>
            <person name="Morooka N."/>
            <person name="Yamamoto Y."/>
            <person name="Fujita K."/>
            <person name="Isono K."/>
            <person name="Choi S."/>
            <person name="Ohtsubo E."/>
            <person name="Baba T."/>
            <person name="Wanner B.L."/>
            <person name="Mori H."/>
            <person name="Horiuchi T."/>
        </authorList>
    </citation>
    <scope>NUCLEOTIDE SEQUENCE [LARGE SCALE GENOMIC DNA]</scope>
    <source>
        <strain>K12 / W3110 / ATCC 27325 / DSM 5911</strain>
    </source>
</reference>
<reference key="5">
    <citation type="submission" date="1995-03" db="EMBL/GenBank/DDBJ databases">
        <authorList>
            <person name="Milkman R."/>
        </authorList>
    </citation>
    <scope>NUCLEOTIDE SEQUENCE [GENOMIC DNA] OF 1-173</scope>
    <source>
        <strain>K12</strain>
        <strain>Various ECOR strains</strain>
    </source>
</reference>
<reference key="6">
    <citation type="journal article" date="1998" name="Electrophoresis">
        <title>Extraction of membrane proteins by differential solubilization for separation using two-dimensional gel electrophoresis.</title>
        <authorList>
            <person name="Molloy M.P."/>
            <person name="Herbert B.R."/>
            <person name="Walsh B.J."/>
            <person name="Tyler M.I."/>
            <person name="Traini M."/>
            <person name="Sanchez J.-C."/>
            <person name="Hochstrasser D.F."/>
            <person name="Williams K.L."/>
            <person name="Gooley A.A."/>
        </authorList>
    </citation>
    <scope>PROTEIN SEQUENCE OF 22-26</scope>
    <source>
        <strain>K12 / W3110 / ATCC 27325 / DSM 5911</strain>
    </source>
</reference>
<reference key="7">
    <citation type="journal article" date="1999" name="J. Bacteriol.">
        <title>Characterization of colicin S4 and its receptor, OmpW, a minor protein of the Escherichia coli outer membrane.</title>
        <authorList>
            <person name="Pilsl H."/>
            <person name="Smajs D."/>
            <person name="Braun V."/>
        </authorList>
    </citation>
    <scope>FUNCTION AS A COLICIN RECEPTOR</scope>
</reference>
<evidence type="ECO:0000269" key="1">
    <source>
    </source>
</evidence>
<evidence type="ECO:0000269" key="2">
    <source>
    </source>
</evidence>
<evidence type="ECO:0000305" key="3"/>
<evidence type="ECO:0007829" key="4">
    <source>
        <dbReference type="PDB" id="2F1V"/>
    </source>
</evidence>
<keyword id="KW-0002">3D-structure</keyword>
<keyword id="KW-0998">Cell outer membrane</keyword>
<keyword id="KW-0903">Direct protein sequencing</keyword>
<keyword id="KW-0472">Membrane</keyword>
<keyword id="KW-1185">Reference proteome</keyword>
<keyword id="KW-0732">Signal</keyword>
<keyword id="KW-0812">Transmembrane</keyword>
<keyword id="KW-1134">Transmembrane beta strand</keyword>
<protein>
    <recommendedName>
        <fullName>Outer membrane protein W</fullName>
    </recommendedName>
</protein>
<organism>
    <name type="scientific">Escherichia coli (strain K12)</name>
    <dbReference type="NCBI Taxonomy" id="83333"/>
    <lineage>
        <taxon>Bacteria</taxon>
        <taxon>Pseudomonadati</taxon>
        <taxon>Pseudomonadota</taxon>
        <taxon>Gammaproteobacteria</taxon>
        <taxon>Enterobacterales</taxon>
        <taxon>Enterobacteriaceae</taxon>
        <taxon>Escherichia</taxon>
    </lineage>
</organism>
<sequence length="212" mass="22928">MKKLTVAALAVTTLLSGSAFAHEAGEFFMRAGSATVRPTEGAGGTLGSLGGFSVTNNTQLGLTFTYMATDNIGVELLAATPFRHKIGTRATGDIATVHHLPPTLMAQWYFGDASSKFRPYVGAGINYTTFFDNGFNDHGKEAGLSDLSLKDSWGAAGQVGVDYLINRDWLVNMSVWYMDIDTTANYKLGGAQQHDSVRLDPWVFMFSAGYRF</sequence>
<proteinExistence type="evidence at protein level"/>
<accession>P0A915</accession>
<accession>P21364</accession>
<accession>P97217</accession>
<accession>P97220</accession>
<gene>
    <name type="primary">ompW</name>
    <name type="synonym">yciD</name>
    <name type="ordered locus">b1256</name>
    <name type="ordered locus">JW1248</name>
</gene>
<comment type="function">
    <text evidence="1">Acts as a receptor for colicin S4.</text>
</comment>
<comment type="interaction">
    <interactant intactId="EBI-1132929">
        <id>P0A915</id>
    </interactant>
    <interactant intactId="EBI-906724">
        <id>P0AC47</id>
        <label>frdB</label>
    </interactant>
    <organismsDiffer>false</organismsDiffer>
    <experiments>2</experiments>
</comment>
<comment type="subcellular location">
    <subcellularLocation>
        <location>Cell outer membrane</location>
    </subcellularLocation>
</comment>
<comment type="similarity">
    <text evidence="3">Belongs to the OmpW/AlkL family.</text>
</comment>
<name>OMPW_ECOLI</name>
<feature type="signal peptide" evidence="2">
    <location>
        <begin position="1"/>
        <end position="21"/>
    </location>
</feature>
<feature type="chain" id="PRO_0000020190" description="Outer membrane protein W">
    <location>
        <begin position="22"/>
        <end position="212"/>
    </location>
</feature>
<feature type="sequence variant" description="In strain: ECOR 52 and ECOR 60.">
    <original>T</original>
    <variation>A</variation>
    <location>
        <position position="12"/>
    </location>
</feature>
<feature type="sequence variant" description="In strain: ECOR 46 and ECOR 50.">
    <original>F</original>
    <variation>Y</variation>
    <location>
        <position position="20"/>
    </location>
</feature>
<feature type="strand" evidence="4">
    <location>
        <begin position="27"/>
        <end position="37"/>
    </location>
</feature>
<feature type="strand" evidence="4">
    <location>
        <begin position="57"/>
        <end position="80"/>
    </location>
</feature>
<feature type="strand" evidence="4">
    <location>
        <begin position="82"/>
        <end position="88"/>
    </location>
</feature>
<feature type="turn" evidence="4">
    <location>
        <begin position="89"/>
        <end position="91"/>
    </location>
</feature>
<feature type="strand" evidence="4">
    <location>
        <begin position="92"/>
        <end position="100"/>
    </location>
</feature>
<feature type="strand" evidence="4">
    <location>
        <begin position="103"/>
        <end position="109"/>
    </location>
</feature>
<feature type="strand" evidence="4">
    <location>
        <begin position="116"/>
        <end position="135"/>
    </location>
</feature>
<feature type="helix" evidence="4">
    <location>
        <begin position="137"/>
        <end position="141"/>
    </location>
</feature>
<feature type="strand" evidence="4">
    <location>
        <begin position="144"/>
        <end position="149"/>
    </location>
</feature>
<feature type="strand" evidence="4">
    <location>
        <begin position="152"/>
        <end position="164"/>
    </location>
</feature>
<feature type="strand" evidence="4">
    <location>
        <begin position="166"/>
        <end position="178"/>
    </location>
</feature>
<feature type="strand" evidence="4">
    <location>
        <begin position="181"/>
        <end position="190"/>
    </location>
</feature>
<feature type="strand" evidence="4">
    <location>
        <begin position="195"/>
        <end position="198"/>
    </location>
</feature>
<feature type="strand" evidence="4">
    <location>
        <begin position="202"/>
        <end position="212"/>
    </location>
</feature>